<comment type="function">
    <text evidence="1">Assembles around the rod to form the L-ring and probably protects the motor/basal body from shearing forces during rotation.</text>
</comment>
<comment type="subunit">
    <text evidence="1">The basal body constitutes a major portion of the flagellar organelle and consists of four rings (L,P,S, and M) mounted on a central rod.</text>
</comment>
<comment type="subcellular location">
    <subcellularLocation>
        <location evidence="1">Cell outer membrane</location>
        <topology evidence="1">Lipid-anchor</topology>
    </subcellularLocation>
    <subcellularLocation>
        <location evidence="1">Bacterial flagellum basal body</location>
    </subcellularLocation>
</comment>
<comment type="similarity">
    <text evidence="1">Belongs to the FlgH family.</text>
</comment>
<feature type="signal peptide" evidence="1">
    <location>
        <begin position="1"/>
        <end position="25"/>
    </location>
</feature>
<feature type="chain" id="PRO_1000123941" description="Flagellar L-ring protein">
    <location>
        <begin position="26"/>
        <end position="229"/>
    </location>
</feature>
<feature type="lipid moiety-binding region" description="N-palmitoyl cysteine" evidence="1">
    <location>
        <position position="26"/>
    </location>
</feature>
<feature type="lipid moiety-binding region" description="S-diacylglycerol cysteine" evidence="1">
    <location>
        <position position="26"/>
    </location>
</feature>
<accession>B4E8L3</accession>
<sequence>MKQVRLPSSATVRAACAVAVAALAGCAQIPRDPIIQQPMTAQPPMPMSMQAPGSIYNPGFAGRPLFEDQRPRNIGDILTIMIAENINATKSSGANTNRQGNTDFNVPTAGFLGGLFAKANLSATGANKFAATGGASAANTFNGTITVTVTNVLPNGNLVVSGEKQMLINQGNEFVRFSGVVNPNTISGANSVYSTQVADAKIEYSSKGYINEAETMGWLQRFFLNIAPW</sequence>
<keyword id="KW-0975">Bacterial flagellum</keyword>
<keyword id="KW-0998">Cell outer membrane</keyword>
<keyword id="KW-0449">Lipoprotein</keyword>
<keyword id="KW-0472">Membrane</keyword>
<keyword id="KW-0564">Palmitate</keyword>
<keyword id="KW-0732">Signal</keyword>
<reference key="1">
    <citation type="journal article" date="2009" name="J. Bacteriol.">
        <title>The genome of Burkholderia cenocepacia J2315, an epidemic pathogen of cystic fibrosis patients.</title>
        <authorList>
            <person name="Holden M.T."/>
            <person name="Seth-Smith H.M."/>
            <person name="Crossman L.C."/>
            <person name="Sebaihia M."/>
            <person name="Bentley S.D."/>
            <person name="Cerdeno-Tarraga A.M."/>
            <person name="Thomson N.R."/>
            <person name="Bason N."/>
            <person name="Quail M.A."/>
            <person name="Sharp S."/>
            <person name="Cherevach I."/>
            <person name="Churcher C."/>
            <person name="Goodhead I."/>
            <person name="Hauser H."/>
            <person name="Holroyd N."/>
            <person name="Mungall K."/>
            <person name="Scott P."/>
            <person name="Walker D."/>
            <person name="White B."/>
            <person name="Rose H."/>
            <person name="Iversen P."/>
            <person name="Mil-Homens D."/>
            <person name="Rocha E.P."/>
            <person name="Fialho A.M."/>
            <person name="Baldwin A."/>
            <person name="Dowson C."/>
            <person name="Barrell B.G."/>
            <person name="Govan J.R."/>
            <person name="Vandamme P."/>
            <person name="Hart C.A."/>
            <person name="Mahenthiralingam E."/>
            <person name="Parkhill J."/>
        </authorList>
    </citation>
    <scope>NUCLEOTIDE SEQUENCE [LARGE SCALE GENOMIC DNA]</scope>
    <source>
        <strain>ATCC BAA-245 / DSM 16553 / LMG 16656 / NCTC 13227 / J2315 / CF5610</strain>
    </source>
</reference>
<name>FLGH_BURCJ</name>
<protein>
    <recommendedName>
        <fullName evidence="1">Flagellar L-ring protein</fullName>
    </recommendedName>
    <alternativeName>
        <fullName evidence="1">Basal body L-ring protein</fullName>
    </alternativeName>
</protein>
<gene>
    <name evidence="1" type="primary">flgH</name>
    <name type="ordered locus">BceJ2315_05670</name>
    <name type="ORF">BCAL0570</name>
</gene>
<dbReference type="EMBL" id="AM747720">
    <property type="protein sequence ID" value="CAR50880.1"/>
    <property type="molecule type" value="Genomic_DNA"/>
</dbReference>
<dbReference type="RefSeq" id="WP_006495504.1">
    <property type="nucleotide sequence ID" value="NC_011000.1"/>
</dbReference>
<dbReference type="SMR" id="B4E8L3"/>
<dbReference type="GeneID" id="56559614"/>
<dbReference type="KEGG" id="bcj:BCAL0570"/>
<dbReference type="eggNOG" id="COG2063">
    <property type="taxonomic scope" value="Bacteria"/>
</dbReference>
<dbReference type="HOGENOM" id="CLU_069313_0_0_4"/>
<dbReference type="BioCyc" id="BCEN216591:G1G1V-646-MONOMER"/>
<dbReference type="Proteomes" id="UP000001035">
    <property type="component" value="Chromosome 1"/>
</dbReference>
<dbReference type="GO" id="GO:0009427">
    <property type="term" value="C:bacterial-type flagellum basal body, distal rod, L ring"/>
    <property type="evidence" value="ECO:0007669"/>
    <property type="project" value="InterPro"/>
</dbReference>
<dbReference type="GO" id="GO:0009279">
    <property type="term" value="C:cell outer membrane"/>
    <property type="evidence" value="ECO:0007669"/>
    <property type="project" value="UniProtKB-SubCell"/>
</dbReference>
<dbReference type="GO" id="GO:0003774">
    <property type="term" value="F:cytoskeletal motor activity"/>
    <property type="evidence" value="ECO:0007669"/>
    <property type="project" value="InterPro"/>
</dbReference>
<dbReference type="GO" id="GO:0071973">
    <property type="term" value="P:bacterial-type flagellum-dependent cell motility"/>
    <property type="evidence" value="ECO:0007669"/>
    <property type="project" value="InterPro"/>
</dbReference>
<dbReference type="HAMAP" id="MF_00415">
    <property type="entry name" value="FlgH"/>
    <property type="match status" value="1"/>
</dbReference>
<dbReference type="InterPro" id="IPR000527">
    <property type="entry name" value="Flag_Lring"/>
</dbReference>
<dbReference type="NCBIfam" id="NF009337">
    <property type="entry name" value="PRK12697.1"/>
    <property type="match status" value="1"/>
</dbReference>
<dbReference type="PANTHER" id="PTHR34933">
    <property type="entry name" value="FLAGELLAR L-RING PROTEIN"/>
    <property type="match status" value="1"/>
</dbReference>
<dbReference type="PANTHER" id="PTHR34933:SF3">
    <property type="entry name" value="FLAGELLAR L-RING PROTEIN"/>
    <property type="match status" value="1"/>
</dbReference>
<dbReference type="Pfam" id="PF02107">
    <property type="entry name" value="FlgH"/>
    <property type="match status" value="1"/>
</dbReference>
<dbReference type="PRINTS" id="PR01008">
    <property type="entry name" value="FLGLRINGFLGH"/>
</dbReference>
<dbReference type="PROSITE" id="PS51257">
    <property type="entry name" value="PROKAR_LIPOPROTEIN"/>
    <property type="match status" value="1"/>
</dbReference>
<evidence type="ECO:0000255" key="1">
    <source>
        <dbReference type="HAMAP-Rule" id="MF_00415"/>
    </source>
</evidence>
<proteinExistence type="inferred from homology"/>
<organism>
    <name type="scientific">Burkholderia cenocepacia (strain ATCC BAA-245 / DSM 16553 / LMG 16656 / NCTC 13227 / J2315 / CF5610)</name>
    <name type="common">Burkholderia cepacia (strain J2315)</name>
    <dbReference type="NCBI Taxonomy" id="216591"/>
    <lineage>
        <taxon>Bacteria</taxon>
        <taxon>Pseudomonadati</taxon>
        <taxon>Pseudomonadota</taxon>
        <taxon>Betaproteobacteria</taxon>
        <taxon>Burkholderiales</taxon>
        <taxon>Burkholderiaceae</taxon>
        <taxon>Burkholderia</taxon>
        <taxon>Burkholderia cepacia complex</taxon>
    </lineage>
</organism>